<protein>
    <recommendedName>
        <fullName evidence="1">Threonine--tRNA ligase</fullName>
        <ecNumber evidence="1">6.1.1.3</ecNumber>
    </recommendedName>
    <alternativeName>
        <fullName evidence="1">Threonyl-tRNA synthetase</fullName>
        <shortName evidence="1">ThrRS</shortName>
    </alternativeName>
</protein>
<accession>Q3KEY2</accession>
<keyword id="KW-0030">Aminoacyl-tRNA synthetase</keyword>
<keyword id="KW-0067">ATP-binding</keyword>
<keyword id="KW-0963">Cytoplasm</keyword>
<keyword id="KW-0436">Ligase</keyword>
<keyword id="KW-0479">Metal-binding</keyword>
<keyword id="KW-0547">Nucleotide-binding</keyword>
<keyword id="KW-0648">Protein biosynthesis</keyword>
<keyword id="KW-0694">RNA-binding</keyword>
<keyword id="KW-0820">tRNA-binding</keyword>
<keyword id="KW-0862">Zinc</keyword>
<proteinExistence type="inferred from homology"/>
<evidence type="ECO:0000255" key="1">
    <source>
        <dbReference type="HAMAP-Rule" id="MF_00184"/>
    </source>
</evidence>
<evidence type="ECO:0000255" key="2">
    <source>
        <dbReference type="PROSITE-ProRule" id="PRU01228"/>
    </source>
</evidence>
<organism>
    <name type="scientific">Pseudomonas fluorescens (strain Pf0-1)</name>
    <dbReference type="NCBI Taxonomy" id="205922"/>
    <lineage>
        <taxon>Bacteria</taxon>
        <taxon>Pseudomonadati</taxon>
        <taxon>Pseudomonadota</taxon>
        <taxon>Gammaproteobacteria</taxon>
        <taxon>Pseudomonadales</taxon>
        <taxon>Pseudomonadaceae</taxon>
        <taxon>Pseudomonas</taxon>
    </lineage>
</organism>
<dbReference type="EC" id="6.1.1.3" evidence="1"/>
<dbReference type="EMBL" id="CP000094">
    <property type="protein sequence ID" value="ABA73674.1"/>
    <property type="molecule type" value="Genomic_DNA"/>
</dbReference>
<dbReference type="RefSeq" id="WP_011333386.1">
    <property type="nucleotide sequence ID" value="NC_007492.2"/>
</dbReference>
<dbReference type="SMR" id="Q3KEY2"/>
<dbReference type="KEGG" id="pfo:Pfl01_1931"/>
<dbReference type="eggNOG" id="COG0441">
    <property type="taxonomic scope" value="Bacteria"/>
</dbReference>
<dbReference type="HOGENOM" id="CLU_008554_0_1_6"/>
<dbReference type="Proteomes" id="UP000002704">
    <property type="component" value="Chromosome"/>
</dbReference>
<dbReference type="GO" id="GO:0005829">
    <property type="term" value="C:cytosol"/>
    <property type="evidence" value="ECO:0007669"/>
    <property type="project" value="TreeGrafter"/>
</dbReference>
<dbReference type="GO" id="GO:0005524">
    <property type="term" value="F:ATP binding"/>
    <property type="evidence" value="ECO:0007669"/>
    <property type="project" value="UniProtKB-UniRule"/>
</dbReference>
<dbReference type="GO" id="GO:0046872">
    <property type="term" value="F:metal ion binding"/>
    <property type="evidence" value="ECO:0007669"/>
    <property type="project" value="UniProtKB-KW"/>
</dbReference>
<dbReference type="GO" id="GO:0004829">
    <property type="term" value="F:threonine-tRNA ligase activity"/>
    <property type="evidence" value="ECO:0007669"/>
    <property type="project" value="UniProtKB-UniRule"/>
</dbReference>
<dbReference type="GO" id="GO:0000049">
    <property type="term" value="F:tRNA binding"/>
    <property type="evidence" value="ECO:0007669"/>
    <property type="project" value="UniProtKB-KW"/>
</dbReference>
<dbReference type="GO" id="GO:0006435">
    <property type="term" value="P:threonyl-tRNA aminoacylation"/>
    <property type="evidence" value="ECO:0007669"/>
    <property type="project" value="UniProtKB-UniRule"/>
</dbReference>
<dbReference type="CDD" id="cd01667">
    <property type="entry name" value="TGS_ThrRS"/>
    <property type="match status" value="1"/>
</dbReference>
<dbReference type="CDD" id="cd00860">
    <property type="entry name" value="ThrRS_anticodon"/>
    <property type="match status" value="1"/>
</dbReference>
<dbReference type="CDD" id="cd00771">
    <property type="entry name" value="ThrRS_core"/>
    <property type="match status" value="1"/>
</dbReference>
<dbReference type="FunFam" id="3.10.20.30:FF:000005">
    <property type="entry name" value="Threonine--tRNA ligase"/>
    <property type="match status" value="1"/>
</dbReference>
<dbReference type="FunFam" id="3.30.54.20:FF:000002">
    <property type="entry name" value="Threonine--tRNA ligase"/>
    <property type="match status" value="1"/>
</dbReference>
<dbReference type="FunFam" id="3.30.930.10:FF:000002">
    <property type="entry name" value="Threonine--tRNA ligase"/>
    <property type="match status" value="1"/>
</dbReference>
<dbReference type="FunFam" id="3.40.50.800:FF:000001">
    <property type="entry name" value="Threonine--tRNA ligase"/>
    <property type="match status" value="1"/>
</dbReference>
<dbReference type="FunFam" id="3.30.980.10:FF:000005">
    <property type="entry name" value="Threonyl-tRNA synthetase, mitochondrial"/>
    <property type="match status" value="1"/>
</dbReference>
<dbReference type="Gene3D" id="3.10.20.30">
    <property type="match status" value="1"/>
</dbReference>
<dbReference type="Gene3D" id="3.30.54.20">
    <property type="match status" value="1"/>
</dbReference>
<dbReference type="Gene3D" id="3.40.50.800">
    <property type="entry name" value="Anticodon-binding domain"/>
    <property type="match status" value="1"/>
</dbReference>
<dbReference type="Gene3D" id="3.30.930.10">
    <property type="entry name" value="Bira Bifunctional Protein, Domain 2"/>
    <property type="match status" value="1"/>
</dbReference>
<dbReference type="Gene3D" id="3.30.980.10">
    <property type="entry name" value="Threonyl-trna Synthetase, Chain A, domain 2"/>
    <property type="match status" value="1"/>
</dbReference>
<dbReference type="HAMAP" id="MF_00184">
    <property type="entry name" value="Thr_tRNA_synth"/>
    <property type="match status" value="1"/>
</dbReference>
<dbReference type="InterPro" id="IPR002314">
    <property type="entry name" value="aa-tRNA-synt_IIb"/>
</dbReference>
<dbReference type="InterPro" id="IPR006195">
    <property type="entry name" value="aa-tRNA-synth_II"/>
</dbReference>
<dbReference type="InterPro" id="IPR045864">
    <property type="entry name" value="aa-tRNA-synth_II/BPL/LPL"/>
</dbReference>
<dbReference type="InterPro" id="IPR004154">
    <property type="entry name" value="Anticodon-bd"/>
</dbReference>
<dbReference type="InterPro" id="IPR036621">
    <property type="entry name" value="Anticodon-bd_dom_sf"/>
</dbReference>
<dbReference type="InterPro" id="IPR012675">
    <property type="entry name" value="Beta-grasp_dom_sf"/>
</dbReference>
<dbReference type="InterPro" id="IPR004095">
    <property type="entry name" value="TGS"/>
</dbReference>
<dbReference type="InterPro" id="IPR012676">
    <property type="entry name" value="TGS-like"/>
</dbReference>
<dbReference type="InterPro" id="IPR002320">
    <property type="entry name" value="Thr-tRNA-ligase_IIa"/>
</dbReference>
<dbReference type="InterPro" id="IPR018163">
    <property type="entry name" value="Thr/Ala-tRNA-synth_IIc_edit"/>
</dbReference>
<dbReference type="InterPro" id="IPR047246">
    <property type="entry name" value="ThrRS_anticodon"/>
</dbReference>
<dbReference type="InterPro" id="IPR033728">
    <property type="entry name" value="ThrRS_core"/>
</dbReference>
<dbReference type="InterPro" id="IPR012947">
    <property type="entry name" value="tRNA_SAD"/>
</dbReference>
<dbReference type="NCBIfam" id="TIGR00418">
    <property type="entry name" value="thrS"/>
    <property type="match status" value="1"/>
</dbReference>
<dbReference type="PANTHER" id="PTHR11451:SF44">
    <property type="entry name" value="THREONINE--TRNA LIGASE, CHLOROPLASTIC_MITOCHONDRIAL 2"/>
    <property type="match status" value="1"/>
</dbReference>
<dbReference type="PANTHER" id="PTHR11451">
    <property type="entry name" value="THREONINE-TRNA LIGASE"/>
    <property type="match status" value="1"/>
</dbReference>
<dbReference type="Pfam" id="PF03129">
    <property type="entry name" value="HGTP_anticodon"/>
    <property type="match status" value="1"/>
</dbReference>
<dbReference type="Pfam" id="PF02824">
    <property type="entry name" value="TGS"/>
    <property type="match status" value="1"/>
</dbReference>
<dbReference type="Pfam" id="PF00587">
    <property type="entry name" value="tRNA-synt_2b"/>
    <property type="match status" value="1"/>
</dbReference>
<dbReference type="Pfam" id="PF07973">
    <property type="entry name" value="tRNA_SAD"/>
    <property type="match status" value="1"/>
</dbReference>
<dbReference type="PRINTS" id="PR01047">
    <property type="entry name" value="TRNASYNTHTHR"/>
</dbReference>
<dbReference type="SMART" id="SM00863">
    <property type="entry name" value="tRNA_SAD"/>
    <property type="match status" value="1"/>
</dbReference>
<dbReference type="SUPFAM" id="SSF52954">
    <property type="entry name" value="Class II aaRS ABD-related"/>
    <property type="match status" value="1"/>
</dbReference>
<dbReference type="SUPFAM" id="SSF55681">
    <property type="entry name" value="Class II aaRS and biotin synthetases"/>
    <property type="match status" value="1"/>
</dbReference>
<dbReference type="SUPFAM" id="SSF81271">
    <property type="entry name" value="TGS-like"/>
    <property type="match status" value="1"/>
</dbReference>
<dbReference type="SUPFAM" id="SSF55186">
    <property type="entry name" value="ThrRS/AlaRS common domain"/>
    <property type="match status" value="1"/>
</dbReference>
<dbReference type="PROSITE" id="PS50862">
    <property type="entry name" value="AA_TRNA_LIGASE_II"/>
    <property type="match status" value="1"/>
</dbReference>
<dbReference type="PROSITE" id="PS51880">
    <property type="entry name" value="TGS"/>
    <property type="match status" value="1"/>
</dbReference>
<reference key="1">
    <citation type="journal article" date="2009" name="Genome Biol.">
        <title>Genomic and genetic analyses of diversity and plant interactions of Pseudomonas fluorescens.</title>
        <authorList>
            <person name="Silby M.W."/>
            <person name="Cerdeno-Tarraga A.M."/>
            <person name="Vernikos G.S."/>
            <person name="Giddens S.R."/>
            <person name="Jackson R.W."/>
            <person name="Preston G.M."/>
            <person name="Zhang X.-X."/>
            <person name="Moon C.D."/>
            <person name="Gehrig S.M."/>
            <person name="Godfrey S.A.C."/>
            <person name="Knight C.G."/>
            <person name="Malone J.G."/>
            <person name="Robinson Z."/>
            <person name="Spiers A.J."/>
            <person name="Harris S."/>
            <person name="Challis G.L."/>
            <person name="Yaxley A.M."/>
            <person name="Harris D."/>
            <person name="Seeger K."/>
            <person name="Murphy L."/>
            <person name="Rutter S."/>
            <person name="Squares R."/>
            <person name="Quail M.A."/>
            <person name="Saunders E."/>
            <person name="Mavromatis K."/>
            <person name="Brettin T.S."/>
            <person name="Bentley S.D."/>
            <person name="Hothersall J."/>
            <person name="Stephens E."/>
            <person name="Thomas C.M."/>
            <person name="Parkhill J."/>
            <person name="Levy S.B."/>
            <person name="Rainey P.B."/>
            <person name="Thomson N.R."/>
        </authorList>
    </citation>
    <scope>NUCLEOTIDE SEQUENCE [LARGE SCALE GENOMIC DNA]</scope>
    <source>
        <strain>Pf0-1</strain>
    </source>
</reference>
<comment type="function">
    <text evidence="1">Catalyzes the attachment of threonine to tRNA(Thr) in a two-step reaction: L-threonine is first activated by ATP to form Thr-AMP and then transferred to the acceptor end of tRNA(Thr). Also edits incorrectly charged L-seryl-tRNA(Thr).</text>
</comment>
<comment type="catalytic activity">
    <reaction evidence="1">
        <text>tRNA(Thr) + L-threonine + ATP = L-threonyl-tRNA(Thr) + AMP + diphosphate + H(+)</text>
        <dbReference type="Rhea" id="RHEA:24624"/>
        <dbReference type="Rhea" id="RHEA-COMP:9670"/>
        <dbReference type="Rhea" id="RHEA-COMP:9704"/>
        <dbReference type="ChEBI" id="CHEBI:15378"/>
        <dbReference type="ChEBI" id="CHEBI:30616"/>
        <dbReference type="ChEBI" id="CHEBI:33019"/>
        <dbReference type="ChEBI" id="CHEBI:57926"/>
        <dbReference type="ChEBI" id="CHEBI:78442"/>
        <dbReference type="ChEBI" id="CHEBI:78534"/>
        <dbReference type="ChEBI" id="CHEBI:456215"/>
        <dbReference type="EC" id="6.1.1.3"/>
    </reaction>
</comment>
<comment type="cofactor">
    <cofactor evidence="1">
        <name>Zn(2+)</name>
        <dbReference type="ChEBI" id="CHEBI:29105"/>
    </cofactor>
    <text evidence="1">Binds 1 zinc ion per subunit.</text>
</comment>
<comment type="subunit">
    <text evidence="1">Homodimer.</text>
</comment>
<comment type="subcellular location">
    <subcellularLocation>
        <location evidence="1">Cytoplasm</location>
    </subcellularLocation>
</comment>
<comment type="similarity">
    <text evidence="1">Belongs to the class-II aminoacyl-tRNA synthetase family.</text>
</comment>
<gene>
    <name evidence="1" type="primary">thrS</name>
    <name type="ordered locus">Pfl01_1931</name>
</gene>
<sequence>MPTITLPDGSQRSFDHPVSVAEVAASIGAGLAKATVAGKVNGKLVDACDIIDSDATLQIITPKDEEGLEIIRHSCAHLVGHAVKQLYPTAKMVIGPVIDEGFYYDIAFERPFTPDDMAAIEQRMHQLIDTEYDVIKKVTPRAEVIEVFKARGEDYKLRLVEDMPNEQAMGLYYHEEYVDMCRGPHVPNTRFLKSFKLTKLSGAYWRGDAKNEQLQRVYGTAWADKKQLAAYIQRIEEAEKRDHRKIGKRLGLFHTQEEAPGMVFWHPNGWTLYQVLEQYMRKVQRDNGYLEIKTPQVVDRSLWEKSGHWANYADNMFTTESESRDYAIKPMNCPCHVQVFNQGLKSYRELPMRLAEFGACHRNEPSGALHGIMRVRAFTQDDAHIFCTEEQMQAESAAFIKLTMDVYRDFGFTDVEMKLSTRPEKRVGSDELWDRAEAALAAALDSAGLPYDLQPGEGAFYGPKIEFSLKDCLGRVWQCGTLQLDFNLPVRLGAEYVSEDNSRKHPVMLHRAILGSFERFVGILIEHYEGAFPAWLAPTQAVIMNITDKQADFVVQVEKTLNESGFRAKSDLRNEKIGFKIREHTLLKVPYLLVIGDKEVEMQTVAVRTREGADLGSMPVAQFAEFLAQAVSRRGRPDSE</sequence>
<feature type="chain" id="PRO_1000020475" description="Threonine--tRNA ligase">
    <location>
        <begin position="1"/>
        <end position="640"/>
    </location>
</feature>
<feature type="domain" description="TGS" evidence="2">
    <location>
        <begin position="1"/>
        <end position="61"/>
    </location>
</feature>
<feature type="region of interest" description="Catalytic" evidence="1">
    <location>
        <begin position="242"/>
        <end position="533"/>
    </location>
</feature>
<feature type="binding site" evidence="1">
    <location>
        <position position="333"/>
    </location>
    <ligand>
        <name>Zn(2+)</name>
        <dbReference type="ChEBI" id="CHEBI:29105"/>
    </ligand>
</feature>
<feature type="binding site" evidence="1">
    <location>
        <position position="384"/>
    </location>
    <ligand>
        <name>Zn(2+)</name>
        <dbReference type="ChEBI" id="CHEBI:29105"/>
    </ligand>
</feature>
<feature type="binding site" evidence="1">
    <location>
        <position position="510"/>
    </location>
    <ligand>
        <name>Zn(2+)</name>
        <dbReference type="ChEBI" id="CHEBI:29105"/>
    </ligand>
</feature>
<name>SYT_PSEPF</name>